<proteinExistence type="inferred from homology"/>
<accession>B0CH25</accession>
<sequence>MMQPKRTKFRKQFKGRIHGNSKGGTDLNFGAFGLKALEPERVTARQIEAARRAITRHMKRAGRVWIRIFPDLPVTSKPTEVRMGKGKGSVDYWACRVAPGRVMFELDGVPEDVAREALRLGAAKLPIKTRFIQRIAE</sequence>
<reference key="1">
    <citation type="submission" date="2007-12" db="EMBL/GenBank/DDBJ databases">
        <title>Brucella suis ATCC 23445 whole genome shotgun sequencing project.</title>
        <authorList>
            <person name="Setubal J.C."/>
            <person name="Bowns C."/>
            <person name="Boyle S."/>
            <person name="Crasta O.R."/>
            <person name="Czar M.J."/>
            <person name="Dharmanolla C."/>
            <person name="Gillespie J.J."/>
            <person name="Kenyon R.W."/>
            <person name="Lu J."/>
            <person name="Mane S."/>
            <person name="Mohapatra S."/>
            <person name="Nagrani S."/>
            <person name="Purkayastha A."/>
            <person name="Rajasimha H.K."/>
            <person name="Shallom J.M."/>
            <person name="Shallom S."/>
            <person name="Shukla M."/>
            <person name="Snyder E.E."/>
            <person name="Sobral B.W."/>
            <person name="Wattam A.R."/>
            <person name="Will R."/>
            <person name="Williams K."/>
            <person name="Yoo H."/>
            <person name="Bruce D."/>
            <person name="Detter C."/>
            <person name="Munk C."/>
            <person name="Brettin T.S."/>
        </authorList>
    </citation>
    <scope>NUCLEOTIDE SEQUENCE [LARGE SCALE GENOMIC DNA]</scope>
    <source>
        <strain>ATCC 23445 / NCTC 10510</strain>
    </source>
</reference>
<comment type="function">
    <text evidence="1">Binds 23S rRNA and is also seen to make contacts with the A and possibly P site tRNAs.</text>
</comment>
<comment type="subunit">
    <text evidence="1">Part of the 50S ribosomal subunit.</text>
</comment>
<comment type="similarity">
    <text evidence="1">Belongs to the universal ribosomal protein uL16 family.</text>
</comment>
<keyword id="KW-0687">Ribonucleoprotein</keyword>
<keyword id="KW-0689">Ribosomal protein</keyword>
<keyword id="KW-0694">RNA-binding</keyword>
<keyword id="KW-0699">rRNA-binding</keyword>
<keyword id="KW-0820">tRNA-binding</keyword>
<name>RL16_BRUSI</name>
<evidence type="ECO:0000255" key="1">
    <source>
        <dbReference type="HAMAP-Rule" id="MF_01342"/>
    </source>
</evidence>
<evidence type="ECO:0000305" key="2"/>
<gene>
    <name evidence="1" type="primary">rplP</name>
    <name type="ordered locus">BSUIS_A1275</name>
</gene>
<protein>
    <recommendedName>
        <fullName evidence="1">Large ribosomal subunit protein uL16</fullName>
    </recommendedName>
    <alternativeName>
        <fullName evidence="2">50S ribosomal protein L16</fullName>
    </alternativeName>
</protein>
<feature type="chain" id="PRO_1000086744" description="Large ribosomal subunit protein uL16">
    <location>
        <begin position="1"/>
        <end position="137"/>
    </location>
</feature>
<organism>
    <name type="scientific">Brucella suis (strain ATCC 23445 / NCTC 10510)</name>
    <dbReference type="NCBI Taxonomy" id="470137"/>
    <lineage>
        <taxon>Bacteria</taxon>
        <taxon>Pseudomonadati</taxon>
        <taxon>Pseudomonadota</taxon>
        <taxon>Alphaproteobacteria</taxon>
        <taxon>Hyphomicrobiales</taxon>
        <taxon>Brucellaceae</taxon>
        <taxon>Brucella/Ochrobactrum group</taxon>
        <taxon>Brucella</taxon>
    </lineage>
</organism>
<dbReference type="EMBL" id="CP000911">
    <property type="protein sequence ID" value="ABY38326.1"/>
    <property type="molecule type" value="Genomic_DNA"/>
</dbReference>
<dbReference type="RefSeq" id="WP_002964355.1">
    <property type="nucleotide sequence ID" value="NC_010169.1"/>
</dbReference>
<dbReference type="SMR" id="B0CH25"/>
<dbReference type="GeneID" id="97533531"/>
<dbReference type="KEGG" id="bmt:BSUIS_A1275"/>
<dbReference type="HOGENOM" id="CLU_078858_2_1_5"/>
<dbReference type="Proteomes" id="UP000008545">
    <property type="component" value="Chromosome I"/>
</dbReference>
<dbReference type="GO" id="GO:0022625">
    <property type="term" value="C:cytosolic large ribosomal subunit"/>
    <property type="evidence" value="ECO:0007669"/>
    <property type="project" value="TreeGrafter"/>
</dbReference>
<dbReference type="GO" id="GO:0019843">
    <property type="term" value="F:rRNA binding"/>
    <property type="evidence" value="ECO:0007669"/>
    <property type="project" value="UniProtKB-UniRule"/>
</dbReference>
<dbReference type="GO" id="GO:0003735">
    <property type="term" value="F:structural constituent of ribosome"/>
    <property type="evidence" value="ECO:0007669"/>
    <property type="project" value="InterPro"/>
</dbReference>
<dbReference type="GO" id="GO:0000049">
    <property type="term" value="F:tRNA binding"/>
    <property type="evidence" value="ECO:0007669"/>
    <property type="project" value="UniProtKB-KW"/>
</dbReference>
<dbReference type="GO" id="GO:0006412">
    <property type="term" value="P:translation"/>
    <property type="evidence" value="ECO:0007669"/>
    <property type="project" value="UniProtKB-UniRule"/>
</dbReference>
<dbReference type="CDD" id="cd01433">
    <property type="entry name" value="Ribosomal_L16_L10e"/>
    <property type="match status" value="1"/>
</dbReference>
<dbReference type="FunFam" id="3.90.1170.10:FF:000001">
    <property type="entry name" value="50S ribosomal protein L16"/>
    <property type="match status" value="1"/>
</dbReference>
<dbReference type="Gene3D" id="3.90.1170.10">
    <property type="entry name" value="Ribosomal protein L10e/L16"/>
    <property type="match status" value="1"/>
</dbReference>
<dbReference type="HAMAP" id="MF_01342">
    <property type="entry name" value="Ribosomal_uL16"/>
    <property type="match status" value="1"/>
</dbReference>
<dbReference type="InterPro" id="IPR047873">
    <property type="entry name" value="Ribosomal_uL16"/>
</dbReference>
<dbReference type="InterPro" id="IPR000114">
    <property type="entry name" value="Ribosomal_uL16_bact-type"/>
</dbReference>
<dbReference type="InterPro" id="IPR020798">
    <property type="entry name" value="Ribosomal_uL16_CS"/>
</dbReference>
<dbReference type="InterPro" id="IPR016180">
    <property type="entry name" value="Ribosomal_uL16_dom"/>
</dbReference>
<dbReference type="InterPro" id="IPR036920">
    <property type="entry name" value="Ribosomal_uL16_sf"/>
</dbReference>
<dbReference type="NCBIfam" id="TIGR01164">
    <property type="entry name" value="rplP_bact"/>
    <property type="match status" value="1"/>
</dbReference>
<dbReference type="PANTHER" id="PTHR12220">
    <property type="entry name" value="50S/60S RIBOSOMAL PROTEIN L16"/>
    <property type="match status" value="1"/>
</dbReference>
<dbReference type="PANTHER" id="PTHR12220:SF13">
    <property type="entry name" value="LARGE RIBOSOMAL SUBUNIT PROTEIN UL16M"/>
    <property type="match status" value="1"/>
</dbReference>
<dbReference type="Pfam" id="PF00252">
    <property type="entry name" value="Ribosomal_L16"/>
    <property type="match status" value="1"/>
</dbReference>
<dbReference type="PRINTS" id="PR00060">
    <property type="entry name" value="RIBOSOMALL16"/>
</dbReference>
<dbReference type="SUPFAM" id="SSF54686">
    <property type="entry name" value="Ribosomal protein L16p/L10e"/>
    <property type="match status" value="1"/>
</dbReference>
<dbReference type="PROSITE" id="PS00586">
    <property type="entry name" value="RIBOSOMAL_L16_1"/>
    <property type="match status" value="1"/>
</dbReference>
<dbReference type="PROSITE" id="PS00701">
    <property type="entry name" value="RIBOSOMAL_L16_2"/>
    <property type="match status" value="1"/>
</dbReference>